<sequence>MAKRLDLTDVNIYYGSFHAVADVSLAILPRSVTAFIGPSGCGKTTVLRTLNRMHEVIPGARVEGAVLLDDQDIYAPGIDPVGVRRAIGMVFQRPNPFPAMSIRNNVVAGLKLQGVRNRKVLDDTAESSLRGANLWDEVKDRLDKPGGGLSGGQQQRLCIARAIAVQPDVLLMDEPCSSLDPISTMAIEDLISELKQQYTIVIVTHNMQQAARVSDQTAFFNLEAVGKPGRLVEIASTEKIFSNPNQKATEDYISGRFG</sequence>
<proteinExistence type="evidence at protein level"/>
<protein>
    <recommendedName>
        <fullName evidence="1">Phosphate import ATP-binding protein PstB 1</fullName>
        <ecNumber evidence="1">7.3.2.1</ecNumber>
    </recommendedName>
    <alternativeName>
        <fullName evidence="1">ABC phosphate transporter 1</fullName>
    </alternativeName>
    <alternativeName>
        <fullName evidence="1">Phosphate-transporting ATPase 1</fullName>
    </alternativeName>
</protein>
<reference key="1">
    <citation type="journal article" date="1998" name="Nature">
        <title>Deciphering the biology of Mycobacterium tuberculosis from the complete genome sequence.</title>
        <authorList>
            <person name="Cole S.T."/>
            <person name="Brosch R."/>
            <person name="Parkhill J."/>
            <person name="Garnier T."/>
            <person name="Churcher C.M."/>
            <person name="Harris D.E."/>
            <person name="Gordon S.V."/>
            <person name="Eiglmeier K."/>
            <person name="Gas S."/>
            <person name="Barry C.E. III"/>
            <person name="Tekaia F."/>
            <person name="Badcock K."/>
            <person name="Basham D."/>
            <person name="Brown D."/>
            <person name="Chillingworth T."/>
            <person name="Connor R."/>
            <person name="Davies R.M."/>
            <person name="Devlin K."/>
            <person name="Feltwell T."/>
            <person name="Gentles S."/>
            <person name="Hamlin N."/>
            <person name="Holroyd S."/>
            <person name="Hornsby T."/>
            <person name="Jagels K."/>
            <person name="Krogh A."/>
            <person name="McLean J."/>
            <person name="Moule S."/>
            <person name="Murphy L.D."/>
            <person name="Oliver S."/>
            <person name="Osborne J."/>
            <person name="Quail M.A."/>
            <person name="Rajandream M.A."/>
            <person name="Rogers J."/>
            <person name="Rutter S."/>
            <person name="Seeger K."/>
            <person name="Skelton S."/>
            <person name="Squares S."/>
            <person name="Squares R."/>
            <person name="Sulston J.E."/>
            <person name="Taylor K."/>
            <person name="Whitehead S."/>
            <person name="Barrell B.G."/>
        </authorList>
    </citation>
    <scope>NUCLEOTIDE SEQUENCE [LARGE SCALE GENOMIC DNA]</scope>
    <source>
        <strain>ATCC 25618 / H37Rv</strain>
    </source>
</reference>
<reference key="2">
    <citation type="journal article" date="2010" name="Tuberculosis">
        <title>Effect of PstS sub-units or PknD deficiency on the survival of Mycobacterium tuberculosis.</title>
        <authorList>
            <person name="Vanzembergh F."/>
            <person name="Peirs P."/>
            <person name="Lefevre P."/>
            <person name="Celio N."/>
            <person name="Mathys V."/>
            <person name="Content J."/>
            <person name="Kalai M."/>
        </authorList>
    </citation>
    <scope>FUNCTION</scope>
    <scope>INDUCTION BY PHOSPHATE STARVATION</scope>
    <source>
        <strain>H37Rv</strain>
    </source>
</reference>
<reference key="3">
    <citation type="journal article" date="2011" name="Mol. Cell. Proteomics">
        <title>Proteogenomic analysis of Mycobacterium tuberculosis by high resolution mass spectrometry.</title>
        <authorList>
            <person name="Kelkar D.S."/>
            <person name="Kumar D."/>
            <person name="Kumar P."/>
            <person name="Balakrishnan L."/>
            <person name="Muthusamy B."/>
            <person name="Yadav A.K."/>
            <person name="Shrivastava P."/>
            <person name="Marimuthu A."/>
            <person name="Anand S."/>
            <person name="Sundaram H."/>
            <person name="Kingsbury R."/>
            <person name="Harsha H.C."/>
            <person name="Nair B."/>
            <person name="Prasad T.S."/>
            <person name="Chauhan D.S."/>
            <person name="Katoch K."/>
            <person name="Katoch V.M."/>
            <person name="Kumar P."/>
            <person name="Chaerkady R."/>
            <person name="Ramachandran S."/>
            <person name="Dash D."/>
            <person name="Pandey A."/>
        </authorList>
    </citation>
    <scope>IDENTIFICATION BY MASS SPECTROMETRY [LARGE SCALE ANALYSIS]</scope>
    <source>
        <strain>ATCC 25618 / H37Rv</strain>
    </source>
</reference>
<comment type="function">
    <text evidence="1 3">Part of the ABC transporter complex PstSACB involved in phosphate import (Probable). Responsible for energy coupling to the transport system.</text>
</comment>
<comment type="catalytic activity">
    <reaction evidence="1">
        <text>phosphate(out) + ATP + H2O = ADP + 2 phosphate(in) + H(+)</text>
        <dbReference type="Rhea" id="RHEA:24440"/>
        <dbReference type="ChEBI" id="CHEBI:15377"/>
        <dbReference type="ChEBI" id="CHEBI:15378"/>
        <dbReference type="ChEBI" id="CHEBI:30616"/>
        <dbReference type="ChEBI" id="CHEBI:43474"/>
        <dbReference type="ChEBI" id="CHEBI:456216"/>
        <dbReference type="EC" id="7.3.2.1"/>
    </reaction>
</comment>
<comment type="subunit">
    <text evidence="1">The complex is composed of two ATP-binding proteins (PstB), two transmembrane proteins (PstC and PstA) and a solute-binding protein (PstS).</text>
</comment>
<comment type="subcellular location">
    <subcellularLocation>
        <location evidence="1">Cell membrane</location>
        <topology evidence="1">Peripheral membrane protein</topology>
    </subcellularLocation>
</comment>
<comment type="induction">
    <text evidence="2">Transcription induced by phosphate starvation, no change in protein levels on phosphate starvation (at protein level). If bacteria are starved prior to growth in phosphate-free medium protein expression disappears.</text>
</comment>
<comment type="similarity">
    <text evidence="1">Belongs to the ABC transporter superfamily. Phosphate importer (TC 3.A.1.7) family.</text>
</comment>
<organism>
    <name type="scientific">Mycobacterium tuberculosis (strain ATCC 25618 / H37Rv)</name>
    <dbReference type="NCBI Taxonomy" id="83332"/>
    <lineage>
        <taxon>Bacteria</taxon>
        <taxon>Bacillati</taxon>
        <taxon>Actinomycetota</taxon>
        <taxon>Actinomycetes</taxon>
        <taxon>Mycobacteriales</taxon>
        <taxon>Mycobacteriaceae</taxon>
        <taxon>Mycobacterium</taxon>
        <taxon>Mycobacterium tuberculosis complex</taxon>
    </lineage>
</organism>
<evidence type="ECO:0000255" key="1">
    <source>
        <dbReference type="HAMAP-Rule" id="MF_01702"/>
    </source>
</evidence>
<evidence type="ECO:0000269" key="2">
    <source>
    </source>
</evidence>
<evidence type="ECO:0000305" key="3">
    <source>
    </source>
</evidence>
<gene>
    <name evidence="1" type="primary">pstB1</name>
    <name type="synonym">phoT</name>
    <name type="ordered locus">Rv0820</name>
    <name type="ORF">MTV043.12</name>
</gene>
<name>PSTB1_MYCTU</name>
<accession>P9WQL1</accession>
<accession>L0T7L4</accession>
<accession>O53832</accession>
<keyword id="KW-0067">ATP-binding</keyword>
<keyword id="KW-1003">Cell membrane</keyword>
<keyword id="KW-0472">Membrane</keyword>
<keyword id="KW-0547">Nucleotide-binding</keyword>
<keyword id="KW-0592">Phosphate transport</keyword>
<keyword id="KW-1185">Reference proteome</keyword>
<keyword id="KW-1278">Translocase</keyword>
<keyword id="KW-0813">Transport</keyword>
<feature type="chain" id="PRO_0000092849" description="Phosphate import ATP-binding protein PstB 1">
    <location>
        <begin position="1"/>
        <end position="258"/>
    </location>
</feature>
<feature type="domain" description="ABC transporter" evidence="1">
    <location>
        <begin position="5"/>
        <end position="247"/>
    </location>
</feature>
<feature type="binding site" evidence="1">
    <location>
        <begin position="37"/>
        <end position="44"/>
    </location>
    <ligand>
        <name>ATP</name>
        <dbReference type="ChEBI" id="CHEBI:30616"/>
    </ligand>
</feature>
<dbReference type="EC" id="7.3.2.1" evidence="1"/>
<dbReference type="EMBL" id="AL123456">
    <property type="protein sequence ID" value="CCP43568.1"/>
    <property type="molecule type" value="Genomic_DNA"/>
</dbReference>
<dbReference type="PIR" id="D70810">
    <property type="entry name" value="D70810"/>
</dbReference>
<dbReference type="RefSeq" id="NP_215335.1">
    <property type="nucleotide sequence ID" value="NC_000962.3"/>
</dbReference>
<dbReference type="SMR" id="P9WQL1"/>
<dbReference type="FunCoup" id="P9WQL1">
    <property type="interactions" value="171"/>
</dbReference>
<dbReference type="STRING" id="83332.Rv0820"/>
<dbReference type="PaxDb" id="83332-Rv0820"/>
<dbReference type="DNASU" id="885136"/>
<dbReference type="GeneID" id="885136"/>
<dbReference type="KEGG" id="mtu:Rv0820"/>
<dbReference type="KEGG" id="mtv:RVBD_0820"/>
<dbReference type="TubercuList" id="Rv0820"/>
<dbReference type="eggNOG" id="COG1117">
    <property type="taxonomic scope" value="Bacteria"/>
</dbReference>
<dbReference type="InParanoid" id="P9WQL1"/>
<dbReference type="OrthoDB" id="4398079at2"/>
<dbReference type="PhylomeDB" id="P9WQL1"/>
<dbReference type="Proteomes" id="UP000001584">
    <property type="component" value="Chromosome"/>
</dbReference>
<dbReference type="GO" id="GO:0005886">
    <property type="term" value="C:plasma membrane"/>
    <property type="evidence" value="ECO:0007669"/>
    <property type="project" value="UniProtKB-SubCell"/>
</dbReference>
<dbReference type="GO" id="GO:0005524">
    <property type="term" value="F:ATP binding"/>
    <property type="evidence" value="ECO:0007669"/>
    <property type="project" value="UniProtKB-KW"/>
</dbReference>
<dbReference type="GO" id="GO:0016887">
    <property type="term" value="F:ATP hydrolysis activity"/>
    <property type="evidence" value="ECO:0007669"/>
    <property type="project" value="InterPro"/>
</dbReference>
<dbReference type="GO" id="GO:0015415">
    <property type="term" value="F:ATPase-coupled phosphate ion transmembrane transporter activity"/>
    <property type="evidence" value="ECO:0007669"/>
    <property type="project" value="UniProtKB-EC"/>
</dbReference>
<dbReference type="GO" id="GO:0051701">
    <property type="term" value="P:biological process involved in interaction with host"/>
    <property type="evidence" value="ECO:0000315"/>
    <property type="project" value="MTBBASE"/>
</dbReference>
<dbReference type="GO" id="GO:0035435">
    <property type="term" value="P:phosphate ion transmembrane transport"/>
    <property type="evidence" value="ECO:0007669"/>
    <property type="project" value="InterPro"/>
</dbReference>
<dbReference type="CDD" id="cd03260">
    <property type="entry name" value="ABC_PstB_phosphate_transporter"/>
    <property type="match status" value="1"/>
</dbReference>
<dbReference type="FunFam" id="3.40.50.300:FF:000132">
    <property type="entry name" value="Phosphate import ATP-binding protein PstB"/>
    <property type="match status" value="1"/>
</dbReference>
<dbReference type="Gene3D" id="3.40.50.300">
    <property type="entry name" value="P-loop containing nucleotide triphosphate hydrolases"/>
    <property type="match status" value="1"/>
</dbReference>
<dbReference type="InterPro" id="IPR003593">
    <property type="entry name" value="AAA+_ATPase"/>
</dbReference>
<dbReference type="InterPro" id="IPR003439">
    <property type="entry name" value="ABC_transporter-like_ATP-bd"/>
</dbReference>
<dbReference type="InterPro" id="IPR017871">
    <property type="entry name" value="ABC_transporter-like_CS"/>
</dbReference>
<dbReference type="InterPro" id="IPR027417">
    <property type="entry name" value="P-loop_NTPase"/>
</dbReference>
<dbReference type="InterPro" id="IPR005670">
    <property type="entry name" value="PstB-like"/>
</dbReference>
<dbReference type="NCBIfam" id="TIGR00972">
    <property type="entry name" value="3a0107s01c2"/>
    <property type="match status" value="1"/>
</dbReference>
<dbReference type="PANTHER" id="PTHR43423">
    <property type="entry name" value="ABC TRANSPORTER I FAMILY MEMBER 17"/>
    <property type="match status" value="1"/>
</dbReference>
<dbReference type="PANTHER" id="PTHR43423:SF1">
    <property type="entry name" value="ABC TRANSPORTER I FAMILY MEMBER 17"/>
    <property type="match status" value="1"/>
</dbReference>
<dbReference type="Pfam" id="PF00005">
    <property type="entry name" value="ABC_tran"/>
    <property type="match status" value="1"/>
</dbReference>
<dbReference type="SMART" id="SM00382">
    <property type="entry name" value="AAA"/>
    <property type="match status" value="1"/>
</dbReference>
<dbReference type="SUPFAM" id="SSF52540">
    <property type="entry name" value="P-loop containing nucleoside triphosphate hydrolases"/>
    <property type="match status" value="1"/>
</dbReference>
<dbReference type="PROSITE" id="PS00211">
    <property type="entry name" value="ABC_TRANSPORTER_1"/>
    <property type="match status" value="1"/>
</dbReference>
<dbReference type="PROSITE" id="PS50893">
    <property type="entry name" value="ABC_TRANSPORTER_2"/>
    <property type="match status" value="1"/>
</dbReference>
<dbReference type="PROSITE" id="PS51238">
    <property type="entry name" value="PSTB"/>
    <property type="match status" value="1"/>
</dbReference>